<keyword id="KW-1003">Cell membrane</keyword>
<keyword id="KW-0966">Cell projection</keyword>
<keyword id="KW-0175">Coiled coil</keyword>
<keyword id="KW-0472">Membrane</keyword>
<keyword id="KW-0597">Phosphoprotein</keyword>
<keyword id="KW-1267">Proteomics identification</keyword>
<keyword id="KW-1185">Reference proteome</keyword>
<keyword id="KW-0812">Transmembrane</keyword>
<keyword id="KW-1133">Transmembrane helix</keyword>
<comment type="subcellular location">
    <subcellularLocation>
        <location evidence="1">Cell membrane</location>
        <topology evidence="7">Single-pass membrane protein</topology>
    </subcellularLocation>
    <subcellularLocation>
        <location evidence="1">Cell projection</location>
        <location evidence="1">Ruffle membrane</location>
    </subcellularLocation>
    <subcellularLocation>
        <location evidence="1">Cleavage furrow</location>
    </subcellularLocation>
    <text evidence="1">In interphase associated with the plasma membrane, in particular with membrane ruffling regions. In cells undergoing cytokinesis, transiently found around the ingressing cleavage furrow. Not detected at the midbody ring/Flemming body.</text>
</comment>
<comment type="similarity">
    <text evidence="7">Belongs to the PSD family.</text>
</comment>
<reference key="1">
    <citation type="journal article" date="2001" name="Genome Res.">
        <title>Towards a catalog of human genes and proteins: sequencing and analysis of 500 novel complete protein coding human cDNAs.</title>
        <authorList>
            <person name="Wiemann S."/>
            <person name="Weil B."/>
            <person name="Wellenreuther R."/>
            <person name="Gassenhuber J."/>
            <person name="Glassl S."/>
            <person name="Ansorge W."/>
            <person name="Boecher M."/>
            <person name="Bloecker H."/>
            <person name="Bauersachs S."/>
            <person name="Blum H."/>
            <person name="Lauber J."/>
            <person name="Duesterhoeft A."/>
            <person name="Beyer A."/>
            <person name="Koehrer K."/>
            <person name="Strack N."/>
            <person name="Mewes H.-W."/>
            <person name="Ottenwaelder B."/>
            <person name="Obermaier B."/>
            <person name="Tampe J."/>
            <person name="Heubner D."/>
            <person name="Wambutt R."/>
            <person name="Korn B."/>
            <person name="Klein M."/>
            <person name="Poustka A."/>
        </authorList>
    </citation>
    <scope>NUCLEOTIDE SEQUENCE [LARGE SCALE MRNA]</scope>
    <source>
        <tissue>Amygdala</tissue>
    </source>
</reference>
<reference key="2">
    <citation type="journal article" date="2004" name="Nature">
        <title>The DNA sequence and comparative analysis of human chromosome 5.</title>
        <authorList>
            <person name="Schmutz J."/>
            <person name="Martin J."/>
            <person name="Terry A."/>
            <person name="Couronne O."/>
            <person name="Grimwood J."/>
            <person name="Lowry S."/>
            <person name="Gordon L.A."/>
            <person name="Scott D."/>
            <person name="Xie G."/>
            <person name="Huang W."/>
            <person name="Hellsten U."/>
            <person name="Tran-Gyamfi M."/>
            <person name="She X."/>
            <person name="Prabhakar S."/>
            <person name="Aerts A."/>
            <person name="Altherr M."/>
            <person name="Bajorek E."/>
            <person name="Black S."/>
            <person name="Branscomb E."/>
            <person name="Caoile C."/>
            <person name="Challacombe J.F."/>
            <person name="Chan Y.M."/>
            <person name="Denys M."/>
            <person name="Detter J.C."/>
            <person name="Escobar J."/>
            <person name="Flowers D."/>
            <person name="Fotopulos D."/>
            <person name="Glavina T."/>
            <person name="Gomez M."/>
            <person name="Gonzales E."/>
            <person name="Goodstein D."/>
            <person name="Grigoriev I."/>
            <person name="Groza M."/>
            <person name="Hammon N."/>
            <person name="Hawkins T."/>
            <person name="Haydu L."/>
            <person name="Israni S."/>
            <person name="Jett J."/>
            <person name="Kadner K."/>
            <person name="Kimball H."/>
            <person name="Kobayashi A."/>
            <person name="Lopez F."/>
            <person name="Lou Y."/>
            <person name="Martinez D."/>
            <person name="Medina C."/>
            <person name="Morgan J."/>
            <person name="Nandkeshwar R."/>
            <person name="Noonan J.P."/>
            <person name="Pitluck S."/>
            <person name="Pollard M."/>
            <person name="Predki P."/>
            <person name="Priest J."/>
            <person name="Ramirez L."/>
            <person name="Retterer J."/>
            <person name="Rodriguez A."/>
            <person name="Rogers S."/>
            <person name="Salamov A."/>
            <person name="Salazar A."/>
            <person name="Thayer N."/>
            <person name="Tice H."/>
            <person name="Tsai M."/>
            <person name="Ustaszewska A."/>
            <person name="Vo N."/>
            <person name="Wheeler J."/>
            <person name="Wu K."/>
            <person name="Yang J."/>
            <person name="Dickson M."/>
            <person name="Cheng J.-F."/>
            <person name="Eichler E.E."/>
            <person name="Olsen A."/>
            <person name="Pennacchio L.A."/>
            <person name="Rokhsar D.S."/>
            <person name="Richardson P."/>
            <person name="Lucas S.M."/>
            <person name="Myers R.M."/>
            <person name="Rubin E.M."/>
        </authorList>
    </citation>
    <scope>NUCLEOTIDE SEQUENCE [LARGE SCALE GENOMIC DNA]</scope>
</reference>
<reference key="3">
    <citation type="submission" date="2005-09" db="EMBL/GenBank/DDBJ databases">
        <authorList>
            <person name="Mural R.J."/>
            <person name="Istrail S."/>
            <person name="Sutton G.G."/>
            <person name="Florea L."/>
            <person name="Halpern A.L."/>
            <person name="Mobarry C.M."/>
            <person name="Lippert R."/>
            <person name="Walenz B."/>
            <person name="Shatkay H."/>
            <person name="Dew I."/>
            <person name="Miller J.R."/>
            <person name="Flanigan M.J."/>
            <person name="Edwards N.J."/>
            <person name="Bolanos R."/>
            <person name="Fasulo D."/>
            <person name="Halldorsson B.V."/>
            <person name="Hannenhalli S."/>
            <person name="Turner R."/>
            <person name="Yooseph S."/>
            <person name="Lu F."/>
            <person name="Nusskern D.R."/>
            <person name="Shue B.C."/>
            <person name="Zheng X.H."/>
            <person name="Zhong F."/>
            <person name="Delcher A.L."/>
            <person name="Huson D.H."/>
            <person name="Kravitz S.A."/>
            <person name="Mouchard L."/>
            <person name="Reinert K."/>
            <person name="Remington K.A."/>
            <person name="Clark A.G."/>
            <person name="Waterman M.S."/>
            <person name="Eichler E.E."/>
            <person name="Adams M.D."/>
            <person name="Hunkapiller M.W."/>
            <person name="Myers E.W."/>
            <person name="Venter J.C."/>
        </authorList>
    </citation>
    <scope>NUCLEOTIDE SEQUENCE [LARGE SCALE GENOMIC DNA]</scope>
</reference>
<reference key="4">
    <citation type="journal article" date="2004" name="Genome Res.">
        <title>The status, quality, and expansion of the NIH full-length cDNA project: the Mammalian Gene Collection (MGC).</title>
        <authorList>
            <consortium name="The MGC Project Team"/>
        </authorList>
    </citation>
    <scope>NUCLEOTIDE SEQUENCE [LARGE SCALE MRNA]</scope>
    <source>
        <tissue>Brain</tissue>
    </source>
</reference>
<reference key="5">
    <citation type="journal article" date="2007" name="BMC Genomics">
        <title>The full-ORF clone resource of the German cDNA consortium.</title>
        <authorList>
            <person name="Bechtel S."/>
            <person name="Rosenfelder H."/>
            <person name="Duda A."/>
            <person name="Schmidt C.P."/>
            <person name="Ernst U."/>
            <person name="Wellenreuther R."/>
            <person name="Mehrle A."/>
            <person name="Schuster C."/>
            <person name="Bahr A."/>
            <person name="Bloecker H."/>
            <person name="Heubner D."/>
            <person name="Hoerlein A."/>
            <person name="Michel G."/>
            <person name="Wedler H."/>
            <person name="Koehrer K."/>
            <person name="Ottenwaelder B."/>
            <person name="Poustka A."/>
            <person name="Wiemann S."/>
            <person name="Schupp I."/>
        </authorList>
    </citation>
    <scope>NUCLEOTIDE SEQUENCE [LARGE SCALE MRNA] OF 339-771</scope>
    <scope>VARIANT ARG-363</scope>
    <source>
        <tissue>Amygdala</tissue>
    </source>
</reference>
<name>PSD2_HUMAN</name>
<proteinExistence type="evidence at protein level"/>
<organism>
    <name type="scientific">Homo sapiens</name>
    <name type="common">Human</name>
    <dbReference type="NCBI Taxonomy" id="9606"/>
    <lineage>
        <taxon>Eukaryota</taxon>
        <taxon>Metazoa</taxon>
        <taxon>Chordata</taxon>
        <taxon>Craniata</taxon>
        <taxon>Vertebrata</taxon>
        <taxon>Euteleostomi</taxon>
        <taxon>Mammalia</taxon>
        <taxon>Eutheria</taxon>
        <taxon>Euarchontoglires</taxon>
        <taxon>Primates</taxon>
        <taxon>Haplorrhini</taxon>
        <taxon>Catarrhini</taxon>
        <taxon>Hominidae</taxon>
        <taxon>Homo</taxon>
    </lineage>
</organism>
<dbReference type="EMBL" id="AL136559">
    <property type="protein sequence ID" value="CAB66494.1"/>
    <property type="molecule type" value="mRNA"/>
</dbReference>
<dbReference type="EMBL" id="AC008667">
    <property type="status" value="NOT_ANNOTATED_CDS"/>
    <property type="molecule type" value="Genomic_DNA"/>
</dbReference>
<dbReference type="EMBL" id="CH471062">
    <property type="protein sequence ID" value="EAW62088.1"/>
    <property type="molecule type" value="Genomic_DNA"/>
</dbReference>
<dbReference type="EMBL" id="CH471062">
    <property type="protein sequence ID" value="EAW62089.1"/>
    <property type="molecule type" value="Genomic_DNA"/>
</dbReference>
<dbReference type="EMBL" id="BC038233">
    <property type="protein sequence ID" value="AAH38233.1"/>
    <property type="molecule type" value="mRNA"/>
</dbReference>
<dbReference type="EMBL" id="AL834268">
    <property type="protein sequence ID" value="CAD38943.1"/>
    <property type="molecule type" value="mRNA"/>
</dbReference>
<dbReference type="CCDS" id="CCDS4216.1"/>
<dbReference type="RefSeq" id="NP_115665.1">
    <property type="nucleotide sequence ID" value="NM_032289.4"/>
</dbReference>
<dbReference type="RefSeq" id="XP_016865465.1">
    <property type="nucleotide sequence ID" value="XM_017009976.2"/>
</dbReference>
<dbReference type="RefSeq" id="XP_016865466.1">
    <property type="nucleotide sequence ID" value="XM_017009977.2"/>
</dbReference>
<dbReference type="RefSeq" id="XP_047273785.1">
    <property type="nucleotide sequence ID" value="XM_047417829.1"/>
</dbReference>
<dbReference type="RefSeq" id="XP_054209659.1">
    <property type="nucleotide sequence ID" value="XM_054353684.1"/>
</dbReference>
<dbReference type="RefSeq" id="XP_054209660.1">
    <property type="nucleotide sequence ID" value="XM_054353685.1"/>
</dbReference>
<dbReference type="SMR" id="Q9BQI7"/>
<dbReference type="BioGRID" id="123977">
    <property type="interactions" value="14"/>
</dbReference>
<dbReference type="FunCoup" id="Q9BQI7">
    <property type="interactions" value="293"/>
</dbReference>
<dbReference type="IntAct" id="Q9BQI7">
    <property type="interactions" value="10"/>
</dbReference>
<dbReference type="MINT" id="Q9BQI7"/>
<dbReference type="STRING" id="9606.ENSP00000274710"/>
<dbReference type="iPTMnet" id="Q9BQI7"/>
<dbReference type="PhosphoSitePlus" id="Q9BQI7"/>
<dbReference type="BioMuta" id="PSD2"/>
<dbReference type="DMDM" id="313104198"/>
<dbReference type="jPOST" id="Q9BQI7"/>
<dbReference type="MassIVE" id="Q9BQI7"/>
<dbReference type="PaxDb" id="9606-ENSP00000274710"/>
<dbReference type="PeptideAtlas" id="Q9BQI7"/>
<dbReference type="ProteomicsDB" id="78691"/>
<dbReference type="Antibodypedia" id="45396">
    <property type="antibodies" value="29 antibodies from 17 providers"/>
</dbReference>
<dbReference type="DNASU" id="84249"/>
<dbReference type="Ensembl" id="ENST00000274710.4">
    <property type="protein sequence ID" value="ENSP00000274710.3"/>
    <property type="gene ID" value="ENSG00000146005.4"/>
</dbReference>
<dbReference type="GeneID" id="84249"/>
<dbReference type="KEGG" id="hsa:84249"/>
<dbReference type="MANE-Select" id="ENST00000274710.4">
    <property type="protein sequence ID" value="ENSP00000274710.3"/>
    <property type="RefSeq nucleotide sequence ID" value="NM_032289.4"/>
    <property type="RefSeq protein sequence ID" value="NP_115665.1"/>
</dbReference>
<dbReference type="UCSC" id="uc003leu.2">
    <property type="organism name" value="human"/>
</dbReference>
<dbReference type="AGR" id="HGNC:19092"/>
<dbReference type="CTD" id="84249"/>
<dbReference type="DisGeNET" id="84249"/>
<dbReference type="GeneCards" id="PSD2"/>
<dbReference type="HGNC" id="HGNC:19092">
    <property type="gene designation" value="PSD2"/>
</dbReference>
<dbReference type="HPA" id="ENSG00000146005">
    <property type="expression patterns" value="Tissue enriched (brain)"/>
</dbReference>
<dbReference type="MIM" id="620656">
    <property type="type" value="gene"/>
</dbReference>
<dbReference type="neXtProt" id="NX_Q9BQI7"/>
<dbReference type="OpenTargets" id="ENSG00000146005"/>
<dbReference type="PharmGKB" id="PA134885177"/>
<dbReference type="VEuPathDB" id="HostDB:ENSG00000146005"/>
<dbReference type="eggNOG" id="KOG0932">
    <property type="taxonomic scope" value="Eukaryota"/>
</dbReference>
<dbReference type="GeneTree" id="ENSGT00940000159674"/>
<dbReference type="HOGENOM" id="CLU_011021_4_0_1"/>
<dbReference type="InParanoid" id="Q9BQI7"/>
<dbReference type="OMA" id="PKETHDK"/>
<dbReference type="OrthoDB" id="2157641at2759"/>
<dbReference type="PAN-GO" id="Q9BQI7">
    <property type="GO annotations" value="0 GO annotations based on evolutionary models"/>
</dbReference>
<dbReference type="PhylomeDB" id="Q9BQI7"/>
<dbReference type="TreeFam" id="TF319755"/>
<dbReference type="PathwayCommons" id="Q9BQI7"/>
<dbReference type="SignaLink" id="Q9BQI7"/>
<dbReference type="BioGRID-ORCS" id="84249">
    <property type="hits" value="10 hits in 1146 CRISPR screens"/>
</dbReference>
<dbReference type="ChiTaRS" id="PSD2">
    <property type="organism name" value="human"/>
</dbReference>
<dbReference type="GenomeRNAi" id="84249"/>
<dbReference type="Pharos" id="Q9BQI7">
    <property type="development level" value="Tdark"/>
</dbReference>
<dbReference type="PRO" id="PR:Q9BQI7"/>
<dbReference type="Proteomes" id="UP000005640">
    <property type="component" value="Chromosome 5"/>
</dbReference>
<dbReference type="RNAct" id="Q9BQI7">
    <property type="molecule type" value="protein"/>
</dbReference>
<dbReference type="Bgee" id="ENSG00000146005">
    <property type="expression patterns" value="Expressed in lateral globus pallidus and 134 other cell types or tissues"/>
</dbReference>
<dbReference type="ExpressionAtlas" id="Q9BQI7">
    <property type="expression patterns" value="baseline and differential"/>
</dbReference>
<dbReference type="GO" id="GO:0032154">
    <property type="term" value="C:cleavage furrow"/>
    <property type="evidence" value="ECO:0000250"/>
    <property type="project" value="UniProtKB"/>
</dbReference>
<dbReference type="GO" id="GO:0030425">
    <property type="term" value="C:dendrite"/>
    <property type="evidence" value="ECO:0007669"/>
    <property type="project" value="Ensembl"/>
</dbReference>
<dbReference type="GO" id="GO:0098978">
    <property type="term" value="C:glutamatergic synapse"/>
    <property type="evidence" value="ECO:0007669"/>
    <property type="project" value="Ensembl"/>
</dbReference>
<dbReference type="GO" id="GO:0043025">
    <property type="term" value="C:neuronal cell body"/>
    <property type="evidence" value="ECO:0007669"/>
    <property type="project" value="Ensembl"/>
</dbReference>
<dbReference type="GO" id="GO:0098794">
    <property type="term" value="C:postsynapse"/>
    <property type="evidence" value="ECO:0007669"/>
    <property type="project" value="Ensembl"/>
</dbReference>
<dbReference type="GO" id="GO:0032587">
    <property type="term" value="C:ruffle membrane"/>
    <property type="evidence" value="ECO:0000250"/>
    <property type="project" value="UniProtKB"/>
</dbReference>
<dbReference type="GO" id="GO:0005085">
    <property type="term" value="F:guanyl-nucleotide exchange factor activity"/>
    <property type="evidence" value="ECO:0007669"/>
    <property type="project" value="InterPro"/>
</dbReference>
<dbReference type="GO" id="GO:0005543">
    <property type="term" value="F:phospholipid binding"/>
    <property type="evidence" value="ECO:0007669"/>
    <property type="project" value="InterPro"/>
</dbReference>
<dbReference type="GO" id="GO:0032012">
    <property type="term" value="P:regulation of ARF protein signal transduction"/>
    <property type="evidence" value="ECO:0007669"/>
    <property type="project" value="InterPro"/>
</dbReference>
<dbReference type="CDD" id="cd13295">
    <property type="entry name" value="PH_EFA6"/>
    <property type="match status" value="1"/>
</dbReference>
<dbReference type="CDD" id="cd00171">
    <property type="entry name" value="Sec7"/>
    <property type="match status" value="1"/>
</dbReference>
<dbReference type="FunFam" id="1.10.1000.11:FF:000004">
    <property type="entry name" value="PH and SEC7 domain-containing protein 2"/>
    <property type="match status" value="1"/>
</dbReference>
<dbReference type="FunFam" id="2.30.29.30:FF:000054">
    <property type="entry name" value="PH and SEC7 domain-containing protein 3"/>
    <property type="match status" value="1"/>
</dbReference>
<dbReference type="Gene3D" id="1.10.1000.11">
    <property type="entry name" value="Arf Nucleotide-binding Site Opener,domain 2"/>
    <property type="match status" value="1"/>
</dbReference>
<dbReference type="Gene3D" id="2.30.29.30">
    <property type="entry name" value="Pleckstrin-homology domain (PH domain)/Phosphotyrosine-binding domain (PTB)"/>
    <property type="match status" value="1"/>
</dbReference>
<dbReference type="InterPro" id="IPR011993">
    <property type="entry name" value="PH-like_dom_sf"/>
</dbReference>
<dbReference type="InterPro" id="IPR041681">
    <property type="entry name" value="PH_9"/>
</dbReference>
<dbReference type="InterPro" id="IPR001605">
    <property type="entry name" value="PH_dom-spectrin-type"/>
</dbReference>
<dbReference type="InterPro" id="IPR001849">
    <property type="entry name" value="PH_domain"/>
</dbReference>
<dbReference type="InterPro" id="IPR023394">
    <property type="entry name" value="Sec7_C_sf"/>
</dbReference>
<dbReference type="InterPro" id="IPR000904">
    <property type="entry name" value="Sec7_dom"/>
</dbReference>
<dbReference type="InterPro" id="IPR035999">
    <property type="entry name" value="Sec7_dom_sf"/>
</dbReference>
<dbReference type="PANTHER" id="PTHR10663">
    <property type="entry name" value="GUANYL-NUCLEOTIDE EXCHANGE FACTOR"/>
    <property type="match status" value="1"/>
</dbReference>
<dbReference type="PANTHER" id="PTHR10663:SF329">
    <property type="entry name" value="PH AND SEC7 DOMAIN-CONTAINING PROTEIN 2"/>
    <property type="match status" value="1"/>
</dbReference>
<dbReference type="Pfam" id="PF15410">
    <property type="entry name" value="PH_9"/>
    <property type="match status" value="1"/>
</dbReference>
<dbReference type="Pfam" id="PF01369">
    <property type="entry name" value="Sec7"/>
    <property type="match status" value="1"/>
</dbReference>
<dbReference type="PRINTS" id="PR00683">
    <property type="entry name" value="SPECTRINPH"/>
</dbReference>
<dbReference type="SMART" id="SM00233">
    <property type="entry name" value="PH"/>
    <property type="match status" value="1"/>
</dbReference>
<dbReference type="SMART" id="SM00222">
    <property type="entry name" value="Sec7"/>
    <property type="match status" value="1"/>
</dbReference>
<dbReference type="SUPFAM" id="SSF50729">
    <property type="entry name" value="PH domain-like"/>
    <property type="match status" value="1"/>
</dbReference>
<dbReference type="SUPFAM" id="SSF48425">
    <property type="entry name" value="Sec7 domain"/>
    <property type="match status" value="1"/>
</dbReference>
<dbReference type="PROSITE" id="PS50003">
    <property type="entry name" value="PH_DOMAIN"/>
    <property type="match status" value="1"/>
</dbReference>
<dbReference type="PROSITE" id="PS50190">
    <property type="entry name" value="SEC7"/>
    <property type="match status" value="1"/>
</dbReference>
<accession>Q9BQI7</accession>
<accession>D3DQD3</accession>
<accession>Q8N3J8</accession>
<sequence length="771" mass="84660">MEEDKLLSAVPEEGDATRDPGPEPEEEPGVRNGMASEGLNSSLCSPGHERRGTPADTEEPTKDPDVAFHGLSLGLSLTNGLALGPDLNILEDSAESRPWRAGVLAEGDNASRSLYPDAEDPQLGLDGPGEPDVRDGFSATFEKILESELLRGTQYSSLDSLDGLSLTDESDSCVSFEAPLTPLIQQRARDSPEPGAGLGIGDMAFEGDMGAAGGDGELGSPLRRSISSSRSENVLSRLSLMAMPNGFHEDGPQGPGGDEDDDEEDTDKLLNSASDPSLKDGLSDSDSELSSSEGLEPGSADPLANGCQGVSEAAHRLARRLYHLEGFQRCDVARQLGKNNEFSRLVAGEYLSFFDFSGLTLDGALRTFLKAFPLMGETQERERVLTHFSRRYCQCNPDDSTSEDGIHTLTCALMLLNTDLHGHNIGKKMSCQQFIANLDQLNDGQDFAKDLLKTLYNSIKNEKLEWAIDEDELRKSLSELVDDKFGTGTKKVTRILDGGNPFLDVPQALSATTYKHGVLTRKTHADMDGKRTPRGRRGWKKFYAVLKGTILYLQKDEYRPDKALSEGDLKNAIRVHHALATRASDYSKKSNVLKLKTADWRVFLFQAPSKEEMLSWILRINLVAAIFSAPAFPAAVSSMKKFCRPLLPSCTTRLCQEEQLRSHENKLRQLTAELAEHRCHPVERGIKSKEAEEYRLKEHYLTFEKSRYETYIHLLAMKIKVGSDDLERIEARLATLEGDDPSLRKTHSSPALSQGHVTGSKTTKDATGPDT</sequence>
<gene>
    <name type="primary">PSD2</name>
    <name type="synonym">EFA6C</name>
</gene>
<protein>
    <recommendedName>
        <fullName>PH and SEC7 domain-containing protein 2</fullName>
    </recommendedName>
    <alternativeName>
        <fullName>Exchange factor for ADP-ribosylation factor guanine nucleotide factor 6 C</fullName>
        <shortName>Exchange factor for ARF6 C</shortName>
    </alternativeName>
    <alternativeName>
        <fullName>Pleckstrin homology and SEC7 domain-containing protein 2</fullName>
    </alternativeName>
</protein>
<evidence type="ECO:0000250" key="1">
    <source>
        <dbReference type="UniProtKB" id="Q6P1I6"/>
    </source>
</evidence>
<evidence type="ECO:0000255" key="2"/>
<evidence type="ECO:0000255" key="3">
    <source>
        <dbReference type="PROSITE-ProRule" id="PRU00145"/>
    </source>
</evidence>
<evidence type="ECO:0000255" key="4">
    <source>
        <dbReference type="PROSITE-ProRule" id="PRU00189"/>
    </source>
</evidence>
<evidence type="ECO:0000256" key="5">
    <source>
        <dbReference type="SAM" id="MobiDB-lite"/>
    </source>
</evidence>
<evidence type="ECO:0000269" key="6">
    <source>
    </source>
</evidence>
<evidence type="ECO:0000305" key="7"/>
<feature type="chain" id="PRO_0000334162" description="PH and SEC7 domain-containing protein 2">
    <location>
        <begin position="1"/>
        <end position="771"/>
    </location>
</feature>
<feature type="transmembrane region" description="Helical" evidence="2">
    <location>
        <begin position="622"/>
        <end position="639"/>
    </location>
</feature>
<feature type="domain" description="SEC7" evidence="4">
    <location>
        <begin position="260"/>
        <end position="462"/>
    </location>
</feature>
<feature type="domain" description="PH" evidence="3">
    <location>
        <begin position="512"/>
        <end position="625"/>
    </location>
</feature>
<feature type="region of interest" description="Disordered" evidence="5">
    <location>
        <begin position="1"/>
        <end position="67"/>
    </location>
</feature>
<feature type="region of interest" description="Disordered" evidence="5">
    <location>
        <begin position="107"/>
        <end position="136"/>
    </location>
</feature>
<feature type="region of interest" description="Disordered" evidence="5">
    <location>
        <begin position="207"/>
        <end position="230"/>
    </location>
</feature>
<feature type="region of interest" description="Disordered" evidence="5">
    <location>
        <begin position="244"/>
        <end position="307"/>
    </location>
</feature>
<feature type="region of interest" description="Disordered" evidence="5">
    <location>
        <begin position="739"/>
        <end position="771"/>
    </location>
</feature>
<feature type="coiled-coil region" evidence="2">
    <location>
        <begin position="651"/>
        <end position="680"/>
    </location>
</feature>
<feature type="compositionally biased region" description="Basic and acidic residues" evidence="5">
    <location>
        <begin position="47"/>
        <end position="66"/>
    </location>
</feature>
<feature type="compositionally biased region" description="Low complexity" evidence="5">
    <location>
        <begin position="218"/>
        <end position="230"/>
    </location>
</feature>
<feature type="compositionally biased region" description="Acidic residues" evidence="5">
    <location>
        <begin position="257"/>
        <end position="266"/>
    </location>
</feature>
<feature type="compositionally biased region" description="Low complexity" evidence="5">
    <location>
        <begin position="288"/>
        <end position="299"/>
    </location>
</feature>
<feature type="compositionally biased region" description="Polar residues" evidence="5">
    <location>
        <begin position="748"/>
        <end position="761"/>
    </location>
</feature>
<feature type="modified residue" description="Phosphoserine" evidence="1">
    <location>
        <position position="191"/>
    </location>
</feature>
<feature type="sequence variant" id="VAR_043346" description="In dbSNP:rs34880693.">
    <original>R</original>
    <variation>Q</variation>
    <location>
        <position position="31"/>
    </location>
</feature>
<feature type="sequence variant" id="VAR_043347" description="In dbSNP:rs3797902.">
    <original>R</original>
    <variation>M</variation>
    <location>
        <position position="51"/>
    </location>
</feature>
<feature type="sequence variant" id="VAR_043348" description="In dbSNP:rs35714177." evidence="6">
    <original>G</original>
    <variation>R</variation>
    <location>
        <position position="363"/>
    </location>
</feature>